<protein>
    <recommendedName>
        <fullName>Shikimate kinase</fullName>
        <shortName>SK</shortName>
        <ecNumber>2.7.1.71</ecNumber>
    </recommendedName>
</protein>
<organism>
    <name type="scientific">Pyrococcus abyssi (strain GE5 / Orsay)</name>
    <dbReference type="NCBI Taxonomy" id="272844"/>
    <lineage>
        <taxon>Archaea</taxon>
        <taxon>Methanobacteriati</taxon>
        <taxon>Methanobacteriota</taxon>
        <taxon>Thermococci</taxon>
        <taxon>Thermococcales</taxon>
        <taxon>Thermococcaceae</taxon>
        <taxon>Pyrococcus</taxon>
    </lineage>
</organism>
<reference key="1">
    <citation type="journal article" date="2003" name="Mol. Microbiol.">
        <title>An integrated analysis of the genome of the hyperthermophilic archaeon Pyrococcus abyssi.</title>
        <authorList>
            <person name="Cohen G.N."/>
            <person name="Barbe V."/>
            <person name="Flament D."/>
            <person name="Galperin M."/>
            <person name="Heilig R."/>
            <person name="Lecompte O."/>
            <person name="Poch O."/>
            <person name="Prieur D."/>
            <person name="Querellou J."/>
            <person name="Ripp R."/>
            <person name="Thierry J.-C."/>
            <person name="Van der Oost J."/>
            <person name="Weissenbach J."/>
            <person name="Zivanovic Y."/>
            <person name="Forterre P."/>
        </authorList>
    </citation>
    <scope>NUCLEOTIDE SEQUENCE [LARGE SCALE GENOMIC DNA]</scope>
    <source>
        <strain>GE5 / Orsay</strain>
    </source>
</reference>
<reference key="2">
    <citation type="journal article" date="2012" name="Curr. Microbiol.">
        <title>Re-annotation of two hyperthermophilic archaea Pyrococcus abyssi GE5 and Pyrococcus furiosus DSM 3638.</title>
        <authorList>
            <person name="Gao J."/>
            <person name="Wang J."/>
        </authorList>
    </citation>
    <scope>GENOME REANNOTATION</scope>
    <source>
        <strain>GE5 / Orsay</strain>
    </source>
</reference>
<comment type="catalytic activity">
    <reaction>
        <text>shikimate + ATP = 3-phosphoshikimate + ADP + H(+)</text>
        <dbReference type="Rhea" id="RHEA:13121"/>
        <dbReference type="ChEBI" id="CHEBI:15378"/>
        <dbReference type="ChEBI" id="CHEBI:30616"/>
        <dbReference type="ChEBI" id="CHEBI:36208"/>
        <dbReference type="ChEBI" id="CHEBI:145989"/>
        <dbReference type="ChEBI" id="CHEBI:456216"/>
        <dbReference type="EC" id="2.7.1.71"/>
    </reaction>
</comment>
<comment type="pathway">
    <text>Metabolic intermediate biosynthesis; chorismate biosynthesis; chorismate from D-erythrose 4-phosphate and phosphoenolpyruvate: step 5/7.</text>
</comment>
<comment type="subcellular location">
    <subcellularLocation>
        <location evidence="1">Cytoplasm</location>
    </subcellularLocation>
</comment>
<comment type="similarity">
    <text evidence="3">Belongs to the GHMP kinase family. Archaeal shikimate kinase subfamily.</text>
</comment>
<sequence>MRGSGRASSAITIVNAFATGKGAAIGIELWTEARVRVTGDGEVRGKIVVKGEEFKDYRLVNSVISVLREVTGEPFGVRFEIHSDIPVGKGLKSSSAAANSLTKALVEALRLNIDDLSIVKLGVEAAKRAGVTITGAFDDACASYFGGLCITDNYEMEILVKREINPETVVLLIPRETVLTESLKGVDFSKISPFIGEALRLAISGEWKKALVINGLLYSTFLGYDLAPMREALKLGAFVGLCGKGPAFFAIADEPEEIIEAWSSFGDVIATSLR</sequence>
<gene>
    <name type="primary">aroK</name>
    <name type="ordered locus">PYRAB04510</name>
    <name type="ORF">PAB0301</name>
</gene>
<accession>Q9V1H6</accession>
<accession>G8ZGF5</accession>
<evidence type="ECO:0000250" key="1"/>
<evidence type="ECO:0000255" key="2"/>
<evidence type="ECO:0000305" key="3"/>
<proteinExistence type="inferred from homology"/>
<feature type="chain" id="PRO_0000141577" description="Shikimate kinase">
    <location>
        <begin position="1"/>
        <end position="274"/>
    </location>
</feature>
<feature type="binding site" evidence="2">
    <location>
        <begin position="86"/>
        <end position="96"/>
    </location>
    <ligand>
        <name>ATP</name>
        <dbReference type="ChEBI" id="CHEBI:30616"/>
    </ligand>
</feature>
<keyword id="KW-0028">Amino-acid biosynthesis</keyword>
<keyword id="KW-0057">Aromatic amino acid biosynthesis</keyword>
<keyword id="KW-0067">ATP-binding</keyword>
<keyword id="KW-0963">Cytoplasm</keyword>
<keyword id="KW-0418">Kinase</keyword>
<keyword id="KW-0547">Nucleotide-binding</keyword>
<keyword id="KW-0808">Transferase</keyword>
<dbReference type="EC" id="2.7.1.71"/>
<dbReference type="EMBL" id="AJ248284">
    <property type="protein sequence ID" value="CAB49373.1"/>
    <property type="molecule type" value="Genomic_DNA"/>
</dbReference>
<dbReference type="EMBL" id="HE613800">
    <property type="protein sequence ID" value="CCE69834.1"/>
    <property type="molecule type" value="Genomic_DNA"/>
</dbReference>
<dbReference type="PIR" id="F75161">
    <property type="entry name" value="F75161"/>
</dbReference>
<dbReference type="RefSeq" id="WP_010867575.1">
    <property type="nucleotide sequence ID" value="NC_000868.1"/>
</dbReference>
<dbReference type="SMR" id="Q9V1H6"/>
<dbReference type="STRING" id="272844.PAB0301"/>
<dbReference type="KEGG" id="pab:PAB0301"/>
<dbReference type="PATRIC" id="fig|272844.11.peg.478"/>
<dbReference type="eggNOG" id="arCOG01025">
    <property type="taxonomic scope" value="Archaea"/>
</dbReference>
<dbReference type="HOGENOM" id="CLU_073768_0_0_2"/>
<dbReference type="OrthoDB" id="9602at2157"/>
<dbReference type="PhylomeDB" id="Q9V1H6"/>
<dbReference type="UniPathway" id="UPA00053">
    <property type="reaction ID" value="UER00088"/>
</dbReference>
<dbReference type="Proteomes" id="UP000000810">
    <property type="component" value="Chromosome"/>
</dbReference>
<dbReference type="Proteomes" id="UP000009139">
    <property type="component" value="Chromosome"/>
</dbReference>
<dbReference type="GO" id="GO:0005737">
    <property type="term" value="C:cytoplasm"/>
    <property type="evidence" value="ECO:0007669"/>
    <property type="project" value="UniProtKB-SubCell"/>
</dbReference>
<dbReference type="GO" id="GO:0005524">
    <property type="term" value="F:ATP binding"/>
    <property type="evidence" value="ECO:0007669"/>
    <property type="project" value="UniProtKB-UniRule"/>
</dbReference>
<dbReference type="GO" id="GO:0004765">
    <property type="term" value="F:shikimate kinase activity"/>
    <property type="evidence" value="ECO:0007669"/>
    <property type="project" value="UniProtKB-UniRule"/>
</dbReference>
<dbReference type="GO" id="GO:0008652">
    <property type="term" value="P:amino acid biosynthetic process"/>
    <property type="evidence" value="ECO:0007669"/>
    <property type="project" value="UniProtKB-KW"/>
</dbReference>
<dbReference type="GO" id="GO:0009073">
    <property type="term" value="P:aromatic amino acid family biosynthetic process"/>
    <property type="evidence" value="ECO:0007669"/>
    <property type="project" value="UniProtKB-KW"/>
</dbReference>
<dbReference type="GO" id="GO:0009423">
    <property type="term" value="P:chorismate biosynthetic process"/>
    <property type="evidence" value="ECO:0007669"/>
    <property type="project" value="UniProtKB-UniRule"/>
</dbReference>
<dbReference type="Gene3D" id="3.30.230.10">
    <property type="match status" value="1"/>
</dbReference>
<dbReference type="HAMAP" id="MF_00370">
    <property type="entry name" value="Shik_kinase_arch"/>
    <property type="match status" value="1"/>
</dbReference>
<dbReference type="InterPro" id="IPR006204">
    <property type="entry name" value="GHMP_kinase_N_dom"/>
</dbReference>
<dbReference type="InterPro" id="IPR020568">
    <property type="entry name" value="Ribosomal_Su5_D2-typ_SF"/>
</dbReference>
<dbReference type="InterPro" id="IPR014721">
    <property type="entry name" value="Ribsml_uS5_D2-typ_fold_subgr"/>
</dbReference>
<dbReference type="InterPro" id="IPR010189">
    <property type="entry name" value="SK_arc"/>
</dbReference>
<dbReference type="NCBIfam" id="TIGR01920">
    <property type="entry name" value="Shik_kin_archae"/>
    <property type="match status" value="1"/>
</dbReference>
<dbReference type="PANTHER" id="PTHR20861">
    <property type="entry name" value="HOMOSERINE/4-DIPHOSPHOCYTIDYL-2-C-METHYL-D-ERYTHRITOL KINASE"/>
    <property type="match status" value="1"/>
</dbReference>
<dbReference type="PANTHER" id="PTHR20861:SF3">
    <property type="entry name" value="SHIKIMATE KINASE"/>
    <property type="match status" value="1"/>
</dbReference>
<dbReference type="Pfam" id="PF00288">
    <property type="entry name" value="GHMP_kinases_N"/>
    <property type="match status" value="1"/>
</dbReference>
<dbReference type="PIRSF" id="PIRSF005758">
    <property type="entry name" value="Shikimt_kin_arch"/>
    <property type="match status" value="1"/>
</dbReference>
<dbReference type="SUPFAM" id="SSF54211">
    <property type="entry name" value="Ribosomal protein S5 domain 2-like"/>
    <property type="match status" value="1"/>
</dbReference>
<name>AROK_PYRAB</name>